<feature type="chain" id="PRO_1000071924" description="Nucleoid-associated protein PsycPRwf_1729">
    <location>
        <begin position="1"/>
        <end position="110"/>
    </location>
</feature>
<reference key="1">
    <citation type="submission" date="2007-05" db="EMBL/GenBank/DDBJ databases">
        <title>Complete sequence of chromosome of Psychrobacter sp. PRwf-1.</title>
        <authorList>
            <consortium name="US DOE Joint Genome Institute"/>
            <person name="Copeland A."/>
            <person name="Lucas S."/>
            <person name="Lapidus A."/>
            <person name="Barry K."/>
            <person name="Detter J.C."/>
            <person name="Glavina del Rio T."/>
            <person name="Hammon N."/>
            <person name="Israni S."/>
            <person name="Dalin E."/>
            <person name="Tice H."/>
            <person name="Pitluck S."/>
            <person name="Chain P."/>
            <person name="Malfatti S."/>
            <person name="Shin M."/>
            <person name="Vergez L."/>
            <person name="Schmutz J."/>
            <person name="Larimer F."/>
            <person name="Land M."/>
            <person name="Hauser L."/>
            <person name="Kyrpides N."/>
            <person name="Kim E."/>
            <person name="Tiedje J."/>
            <person name="Richardson P."/>
        </authorList>
    </citation>
    <scope>NUCLEOTIDE SEQUENCE [LARGE SCALE GENOMIC DNA]</scope>
    <source>
        <strain>PRwf-1</strain>
    </source>
</reference>
<organism>
    <name type="scientific">Psychrobacter sp. (strain PRwf-1)</name>
    <dbReference type="NCBI Taxonomy" id="349106"/>
    <lineage>
        <taxon>Bacteria</taxon>
        <taxon>Pseudomonadati</taxon>
        <taxon>Pseudomonadota</taxon>
        <taxon>Gammaproteobacteria</taxon>
        <taxon>Moraxellales</taxon>
        <taxon>Moraxellaceae</taxon>
        <taxon>Psychrobacter</taxon>
    </lineage>
</organism>
<dbReference type="EMBL" id="CP000713">
    <property type="protein sequence ID" value="ABQ94669.1"/>
    <property type="molecule type" value="Genomic_DNA"/>
</dbReference>
<dbReference type="SMR" id="A5WG78"/>
<dbReference type="STRING" id="349106.PsycPRwf_1729"/>
<dbReference type="KEGG" id="prw:PsycPRwf_1729"/>
<dbReference type="eggNOG" id="COG0718">
    <property type="taxonomic scope" value="Bacteria"/>
</dbReference>
<dbReference type="HOGENOM" id="CLU_140930_0_0_6"/>
<dbReference type="GO" id="GO:0043590">
    <property type="term" value="C:bacterial nucleoid"/>
    <property type="evidence" value="ECO:0007669"/>
    <property type="project" value="UniProtKB-UniRule"/>
</dbReference>
<dbReference type="GO" id="GO:0005829">
    <property type="term" value="C:cytosol"/>
    <property type="evidence" value="ECO:0007669"/>
    <property type="project" value="TreeGrafter"/>
</dbReference>
<dbReference type="GO" id="GO:0003677">
    <property type="term" value="F:DNA binding"/>
    <property type="evidence" value="ECO:0007669"/>
    <property type="project" value="UniProtKB-UniRule"/>
</dbReference>
<dbReference type="Gene3D" id="3.30.1310.10">
    <property type="entry name" value="Nucleoid-associated protein YbaB-like domain"/>
    <property type="match status" value="1"/>
</dbReference>
<dbReference type="HAMAP" id="MF_00274">
    <property type="entry name" value="DNA_YbaB_EbfC"/>
    <property type="match status" value="1"/>
</dbReference>
<dbReference type="InterPro" id="IPR036894">
    <property type="entry name" value="YbaB-like_sf"/>
</dbReference>
<dbReference type="InterPro" id="IPR004401">
    <property type="entry name" value="YbaB/EbfC"/>
</dbReference>
<dbReference type="NCBIfam" id="TIGR00103">
    <property type="entry name" value="DNA_YbaB_EbfC"/>
    <property type="match status" value="1"/>
</dbReference>
<dbReference type="PANTHER" id="PTHR33449">
    <property type="entry name" value="NUCLEOID-ASSOCIATED PROTEIN YBAB"/>
    <property type="match status" value="1"/>
</dbReference>
<dbReference type="PANTHER" id="PTHR33449:SF1">
    <property type="entry name" value="NUCLEOID-ASSOCIATED PROTEIN YBAB"/>
    <property type="match status" value="1"/>
</dbReference>
<dbReference type="Pfam" id="PF02575">
    <property type="entry name" value="YbaB_DNA_bd"/>
    <property type="match status" value="1"/>
</dbReference>
<dbReference type="PIRSF" id="PIRSF004555">
    <property type="entry name" value="UCP004555"/>
    <property type="match status" value="1"/>
</dbReference>
<dbReference type="SUPFAM" id="SSF82607">
    <property type="entry name" value="YbaB-like"/>
    <property type="match status" value="1"/>
</dbReference>
<name>Y1729_PSYWF</name>
<comment type="function">
    <text evidence="1">Binds to DNA and alters its conformation. May be involved in regulation of gene expression, nucleoid organization and DNA protection.</text>
</comment>
<comment type="subunit">
    <text evidence="1">Homodimer.</text>
</comment>
<comment type="subcellular location">
    <subcellularLocation>
        <location evidence="1">Cytoplasm</location>
        <location evidence="1">Nucleoid</location>
    </subcellularLocation>
</comment>
<comment type="similarity">
    <text evidence="1">Belongs to the YbaB/EbfC family.</text>
</comment>
<protein>
    <recommendedName>
        <fullName evidence="1">Nucleoid-associated protein PsycPRwf_1729</fullName>
    </recommendedName>
</protein>
<proteinExistence type="inferred from homology"/>
<accession>A5WG78</accession>
<evidence type="ECO:0000255" key="1">
    <source>
        <dbReference type="HAMAP-Rule" id="MF_00274"/>
    </source>
</evidence>
<sequence>MNIQALMQQAQAMQKQVEANVEKAKKELADKEVQAEAGNGLVKVTMTGRHVVKRLSIDPSLLEDEPDLIEDLIAAAINAAVTKADELSETTLAKATSGMGLPPGMQGLFG</sequence>
<keyword id="KW-0963">Cytoplasm</keyword>
<keyword id="KW-0238">DNA-binding</keyword>
<gene>
    <name type="ordered locus">PsycPRwf_1729</name>
</gene>